<accession>Q4A7U1</accession>
<feature type="chain" id="PRO_1000009536" description="tRNA-specific 2-thiouridylase MnmA">
    <location>
        <begin position="1"/>
        <end position="372"/>
    </location>
</feature>
<feature type="region of interest" description="Interaction with target base in tRNA" evidence="1">
    <location>
        <begin position="104"/>
        <end position="106"/>
    </location>
</feature>
<feature type="region of interest" description="Interaction with tRNA" evidence="1">
    <location>
        <begin position="152"/>
        <end position="154"/>
    </location>
</feature>
<feature type="region of interest" description="Interaction with tRNA" evidence="1">
    <location>
        <begin position="310"/>
        <end position="311"/>
    </location>
</feature>
<feature type="active site" description="Nucleophile" evidence="1">
    <location>
        <position position="109"/>
    </location>
</feature>
<feature type="active site" description="Cysteine persulfide intermediate" evidence="1">
    <location>
        <position position="202"/>
    </location>
</feature>
<feature type="binding site" evidence="1">
    <location>
        <begin position="7"/>
        <end position="14"/>
    </location>
    <ligand>
        <name>ATP</name>
        <dbReference type="ChEBI" id="CHEBI:30616"/>
    </ligand>
</feature>
<feature type="binding site" evidence="1">
    <location>
        <position position="33"/>
    </location>
    <ligand>
        <name>ATP</name>
        <dbReference type="ChEBI" id="CHEBI:30616"/>
    </ligand>
</feature>
<feature type="binding site" evidence="1">
    <location>
        <position position="134"/>
    </location>
    <ligand>
        <name>ATP</name>
        <dbReference type="ChEBI" id="CHEBI:30616"/>
    </ligand>
</feature>
<feature type="site" description="Interaction with tRNA" evidence="1">
    <location>
        <position position="135"/>
    </location>
</feature>
<feature type="site" description="Interaction with tRNA" evidence="1">
    <location>
        <position position="342"/>
    </location>
</feature>
<feature type="disulfide bond" description="Alternate" evidence="1">
    <location>
        <begin position="109"/>
        <end position="202"/>
    </location>
</feature>
<keyword id="KW-0067">ATP-binding</keyword>
<keyword id="KW-0963">Cytoplasm</keyword>
<keyword id="KW-1015">Disulfide bond</keyword>
<keyword id="KW-0547">Nucleotide-binding</keyword>
<keyword id="KW-0694">RNA-binding</keyword>
<keyword id="KW-0808">Transferase</keyword>
<keyword id="KW-0819">tRNA processing</keyword>
<keyword id="KW-0820">tRNA-binding</keyword>
<gene>
    <name evidence="1" type="primary">mnmA</name>
    <name type="synonym">trmU</name>
    <name type="ordered locus">MHP7448_0430</name>
</gene>
<evidence type="ECO:0000255" key="1">
    <source>
        <dbReference type="HAMAP-Rule" id="MF_00144"/>
    </source>
</evidence>
<protein>
    <recommendedName>
        <fullName evidence="1">tRNA-specific 2-thiouridylase MnmA</fullName>
        <ecNumber evidence="1">2.8.1.13</ecNumber>
    </recommendedName>
</protein>
<comment type="function">
    <text evidence="1">Catalyzes the 2-thiolation of uridine at the wobble position (U34) of tRNA, leading to the formation of s(2)U34.</text>
</comment>
<comment type="catalytic activity">
    <reaction evidence="1">
        <text>S-sulfanyl-L-cysteinyl-[protein] + uridine(34) in tRNA + AH2 + ATP = 2-thiouridine(34) in tRNA + L-cysteinyl-[protein] + A + AMP + diphosphate + H(+)</text>
        <dbReference type="Rhea" id="RHEA:47032"/>
        <dbReference type="Rhea" id="RHEA-COMP:10131"/>
        <dbReference type="Rhea" id="RHEA-COMP:11726"/>
        <dbReference type="Rhea" id="RHEA-COMP:11727"/>
        <dbReference type="Rhea" id="RHEA-COMP:11728"/>
        <dbReference type="ChEBI" id="CHEBI:13193"/>
        <dbReference type="ChEBI" id="CHEBI:15378"/>
        <dbReference type="ChEBI" id="CHEBI:17499"/>
        <dbReference type="ChEBI" id="CHEBI:29950"/>
        <dbReference type="ChEBI" id="CHEBI:30616"/>
        <dbReference type="ChEBI" id="CHEBI:33019"/>
        <dbReference type="ChEBI" id="CHEBI:61963"/>
        <dbReference type="ChEBI" id="CHEBI:65315"/>
        <dbReference type="ChEBI" id="CHEBI:87170"/>
        <dbReference type="ChEBI" id="CHEBI:456215"/>
        <dbReference type="EC" id="2.8.1.13"/>
    </reaction>
</comment>
<comment type="subcellular location">
    <subcellularLocation>
        <location evidence="1">Cytoplasm</location>
    </subcellularLocation>
</comment>
<comment type="similarity">
    <text evidence="1">Belongs to the MnmA/TRMU family.</text>
</comment>
<reference key="1">
    <citation type="journal article" date="2005" name="J. Bacteriol.">
        <title>Swine and poultry pathogens: the complete genome sequences of two strains of Mycoplasma hyopneumoniae and a strain of Mycoplasma synoviae.</title>
        <authorList>
            <person name="Vasconcelos A.T.R."/>
            <person name="Ferreira H.B."/>
            <person name="Bizarro C.V."/>
            <person name="Bonatto S.L."/>
            <person name="Carvalho M.O."/>
            <person name="Pinto P.M."/>
            <person name="Almeida D.F."/>
            <person name="Almeida L.G.P."/>
            <person name="Almeida R."/>
            <person name="Alves-Junior L."/>
            <person name="Assuncao E.N."/>
            <person name="Azevedo V.A.C."/>
            <person name="Bogo M.R."/>
            <person name="Brigido M.M."/>
            <person name="Brocchi M."/>
            <person name="Burity H.A."/>
            <person name="Camargo A.A."/>
            <person name="Camargo S.S."/>
            <person name="Carepo M.S."/>
            <person name="Carraro D.M."/>
            <person name="de Mattos Cascardo J.C."/>
            <person name="Castro L.A."/>
            <person name="Cavalcanti G."/>
            <person name="Chemale G."/>
            <person name="Collevatti R.G."/>
            <person name="Cunha C.W."/>
            <person name="Dallagiovanna B."/>
            <person name="Dambros B.P."/>
            <person name="Dellagostin O.A."/>
            <person name="Falcao C."/>
            <person name="Fantinatti-Garboggini F."/>
            <person name="Felipe M.S.S."/>
            <person name="Fiorentin L."/>
            <person name="Franco G.R."/>
            <person name="Freitas N.S.A."/>
            <person name="Frias D."/>
            <person name="Grangeiro T.B."/>
            <person name="Grisard E.C."/>
            <person name="Guimaraes C.T."/>
            <person name="Hungria M."/>
            <person name="Jardim S.N."/>
            <person name="Krieger M.A."/>
            <person name="Laurino J.P."/>
            <person name="Lima L.F.A."/>
            <person name="Lopes M.I."/>
            <person name="Loreto E.L.S."/>
            <person name="Madeira H.M.F."/>
            <person name="Manfio G.P."/>
            <person name="Maranhao A.Q."/>
            <person name="Martinkovics C.T."/>
            <person name="Medeiros S.R.B."/>
            <person name="Moreira M.A.M."/>
            <person name="Neiva M."/>
            <person name="Ramalho-Neto C.E."/>
            <person name="Nicolas M.F."/>
            <person name="Oliveira S.C."/>
            <person name="Paixao R.F.C."/>
            <person name="Pedrosa F.O."/>
            <person name="Pena S.D.J."/>
            <person name="Pereira M."/>
            <person name="Pereira-Ferrari L."/>
            <person name="Piffer I."/>
            <person name="Pinto L.S."/>
            <person name="Potrich D.P."/>
            <person name="Salim A.C.M."/>
            <person name="Santos F.R."/>
            <person name="Schmitt R."/>
            <person name="Schneider M.P.C."/>
            <person name="Schrank A."/>
            <person name="Schrank I.S."/>
            <person name="Schuck A.F."/>
            <person name="Seuanez H.N."/>
            <person name="Silva D.W."/>
            <person name="Silva R."/>
            <person name="Silva S.C."/>
            <person name="Soares C.M.A."/>
            <person name="Souza K.R.L."/>
            <person name="Souza R.C."/>
            <person name="Staats C.C."/>
            <person name="Steffens M.B.R."/>
            <person name="Teixeira S.M.R."/>
            <person name="Urmenyi T.P."/>
            <person name="Vainstein M.H."/>
            <person name="Zuccherato L.W."/>
            <person name="Simpson A.J.G."/>
            <person name="Zaha A."/>
        </authorList>
    </citation>
    <scope>NUCLEOTIDE SEQUENCE [LARGE SCALE GENOMIC DNA]</scope>
    <source>
        <strain>7448</strain>
    </source>
</reference>
<organism>
    <name type="scientific">Mesomycoplasma hyopneumoniae (strain 7448)</name>
    <name type="common">Mycoplasma hyopneumoniae</name>
    <dbReference type="NCBI Taxonomy" id="262722"/>
    <lineage>
        <taxon>Bacteria</taxon>
        <taxon>Bacillati</taxon>
        <taxon>Mycoplasmatota</taxon>
        <taxon>Mycoplasmoidales</taxon>
        <taxon>Metamycoplasmataceae</taxon>
        <taxon>Mesomycoplasma</taxon>
    </lineage>
</organism>
<proteinExistence type="inferred from homology"/>
<sequence length="372" mass="42403">MAKIVVGLSGGVDSAVSAYLLKKAGHNVIAVFMRNWDSSLNNDFLGKKNEKNFTICPQEQDWLDAKVVAKQLNIPIFRIDFIKEYWDEVFSDLILKYQSGLTPNPDILCNKNIKFKHFLDYAQKVHNADFIAMGHYAKTDNGNLYAGADSLKDQSYFLGQLSKSQLQKTIFPLGNLLKSEVRKIANELGLINAKKKDSTGICFIGERKFTDFLQNYIPAQPGNIIDISTKKVLGKHIGIMYFTIGQRKGFGLSGMKEPYFVVGHNLKEKILYVSPQSEKKWLESDSLMAKNANFLSENFRNLDNLSAKFRYRQEAIPIRIEKIQDNSFWISYQKYQAITPGQQVVIYHQNQVILAGEIALLFRNGKKLDYLD</sequence>
<dbReference type="EC" id="2.8.1.13" evidence="1"/>
<dbReference type="EMBL" id="AE017244">
    <property type="protein sequence ID" value="AAZ53798.1"/>
    <property type="molecule type" value="Genomic_DNA"/>
</dbReference>
<dbReference type="RefSeq" id="WP_011290248.1">
    <property type="nucleotide sequence ID" value="NC_007332.1"/>
</dbReference>
<dbReference type="SMR" id="Q4A7U1"/>
<dbReference type="KEGG" id="mhp:MHP7448_0430"/>
<dbReference type="HOGENOM" id="CLU_035188_1_0_14"/>
<dbReference type="Proteomes" id="UP000000553">
    <property type="component" value="Chromosome"/>
</dbReference>
<dbReference type="GO" id="GO:0005737">
    <property type="term" value="C:cytoplasm"/>
    <property type="evidence" value="ECO:0007669"/>
    <property type="project" value="UniProtKB-SubCell"/>
</dbReference>
<dbReference type="GO" id="GO:0005524">
    <property type="term" value="F:ATP binding"/>
    <property type="evidence" value="ECO:0007669"/>
    <property type="project" value="UniProtKB-KW"/>
</dbReference>
<dbReference type="GO" id="GO:0000049">
    <property type="term" value="F:tRNA binding"/>
    <property type="evidence" value="ECO:0007669"/>
    <property type="project" value="UniProtKB-KW"/>
</dbReference>
<dbReference type="GO" id="GO:0103016">
    <property type="term" value="F:tRNA-uridine 2-sulfurtransferase activity"/>
    <property type="evidence" value="ECO:0007669"/>
    <property type="project" value="UniProtKB-EC"/>
</dbReference>
<dbReference type="GO" id="GO:0002143">
    <property type="term" value="P:tRNA wobble position uridine thiolation"/>
    <property type="evidence" value="ECO:0007669"/>
    <property type="project" value="TreeGrafter"/>
</dbReference>
<dbReference type="CDD" id="cd01998">
    <property type="entry name" value="MnmA_TRMU-like"/>
    <property type="match status" value="1"/>
</dbReference>
<dbReference type="FunFam" id="2.30.30.280:FF:000001">
    <property type="entry name" value="tRNA-specific 2-thiouridylase MnmA"/>
    <property type="match status" value="1"/>
</dbReference>
<dbReference type="FunFam" id="3.40.50.620:FF:000115">
    <property type="entry name" value="tRNA-specific 2-thiouridylase MnmA"/>
    <property type="match status" value="1"/>
</dbReference>
<dbReference type="Gene3D" id="2.30.30.280">
    <property type="entry name" value="Adenine nucleotide alpha hydrolases-like domains"/>
    <property type="match status" value="1"/>
</dbReference>
<dbReference type="Gene3D" id="3.40.50.620">
    <property type="entry name" value="HUPs"/>
    <property type="match status" value="1"/>
</dbReference>
<dbReference type="Gene3D" id="2.40.30.10">
    <property type="entry name" value="Translation factors"/>
    <property type="match status" value="1"/>
</dbReference>
<dbReference type="HAMAP" id="MF_00144">
    <property type="entry name" value="tRNA_thiouridyl_MnmA"/>
    <property type="match status" value="1"/>
</dbReference>
<dbReference type="InterPro" id="IPR004506">
    <property type="entry name" value="MnmA-like"/>
</dbReference>
<dbReference type="InterPro" id="IPR046885">
    <property type="entry name" value="MnmA-like_C"/>
</dbReference>
<dbReference type="InterPro" id="IPR046884">
    <property type="entry name" value="MnmA-like_central"/>
</dbReference>
<dbReference type="InterPro" id="IPR023382">
    <property type="entry name" value="MnmA-like_central_sf"/>
</dbReference>
<dbReference type="InterPro" id="IPR014729">
    <property type="entry name" value="Rossmann-like_a/b/a_fold"/>
</dbReference>
<dbReference type="NCBIfam" id="NF001138">
    <property type="entry name" value="PRK00143.1"/>
    <property type="match status" value="1"/>
</dbReference>
<dbReference type="NCBIfam" id="TIGR00420">
    <property type="entry name" value="trmU"/>
    <property type="match status" value="1"/>
</dbReference>
<dbReference type="PANTHER" id="PTHR11933:SF5">
    <property type="entry name" value="MITOCHONDRIAL TRNA-SPECIFIC 2-THIOURIDYLASE 1"/>
    <property type="match status" value="1"/>
</dbReference>
<dbReference type="PANTHER" id="PTHR11933">
    <property type="entry name" value="TRNA 5-METHYLAMINOMETHYL-2-THIOURIDYLATE -METHYLTRANSFERASE"/>
    <property type="match status" value="1"/>
</dbReference>
<dbReference type="Pfam" id="PF03054">
    <property type="entry name" value="tRNA_Me_trans"/>
    <property type="match status" value="1"/>
</dbReference>
<dbReference type="Pfam" id="PF20258">
    <property type="entry name" value="tRNA_Me_trans_C"/>
    <property type="match status" value="1"/>
</dbReference>
<dbReference type="Pfam" id="PF20259">
    <property type="entry name" value="tRNA_Me_trans_M"/>
    <property type="match status" value="1"/>
</dbReference>
<dbReference type="SUPFAM" id="SSF52402">
    <property type="entry name" value="Adenine nucleotide alpha hydrolases-like"/>
    <property type="match status" value="1"/>
</dbReference>
<name>MNMA_MESH7</name>